<dbReference type="EC" id="2.5.1.19" evidence="1"/>
<dbReference type="EMBL" id="CP001364">
    <property type="protein sequence ID" value="ACM51506.1"/>
    <property type="molecule type" value="Genomic_DNA"/>
</dbReference>
<dbReference type="SMR" id="B9LFL8"/>
<dbReference type="KEGG" id="chl:Chy400_0062"/>
<dbReference type="HOGENOM" id="CLU_024321_0_1_0"/>
<dbReference type="OrthoDB" id="9809920at2"/>
<dbReference type="UniPathway" id="UPA00053">
    <property type="reaction ID" value="UER00089"/>
</dbReference>
<dbReference type="GO" id="GO:0005737">
    <property type="term" value="C:cytoplasm"/>
    <property type="evidence" value="ECO:0007669"/>
    <property type="project" value="UniProtKB-SubCell"/>
</dbReference>
<dbReference type="GO" id="GO:0003866">
    <property type="term" value="F:3-phosphoshikimate 1-carboxyvinyltransferase activity"/>
    <property type="evidence" value="ECO:0007669"/>
    <property type="project" value="UniProtKB-UniRule"/>
</dbReference>
<dbReference type="GO" id="GO:0008652">
    <property type="term" value="P:amino acid biosynthetic process"/>
    <property type="evidence" value="ECO:0007669"/>
    <property type="project" value="UniProtKB-KW"/>
</dbReference>
<dbReference type="GO" id="GO:0009073">
    <property type="term" value="P:aromatic amino acid family biosynthetic process"/>
    <property type="evidence" value="ECO:0007669"/>
    <property type="project" value="UniProtKB-KW"/>
</dbReference>
<dbReference type="GO" id="GO:0009423">
    <property type="term" value="P:chorismate biosynthetic process"/>
    <property type="evidence" value="ECO:0007669"/>
    <property type="project" value="UniProtKB-UniRule"/>
</dbReference>
<dbReference type="CDD" id="cd01556">
    <property type="entry name" value="EPSP_synthase"/>
    <property type="match status" value="1"/>
</dbReference>
<dbReference type="FunFam" id="3.65.10.10:FF:000005">
    <property type="entry name" value="3-phosphoshikimate 1-carboxyvinyltransferase"/>
    <property type="match status" value="1"/>
</dbReference>
<dbReference type="FunFam" id="3.65.10.10:FF:000006">
    <property type="entry name" value="3-phosphoshikimate 1-carboxyvinyltransferase"/>
    <property type="match status" value="1"/>
</dbReference>
<dbReference type="Gene3D" id="3.65.10.10">
    <property type="entry name" value="Enolpyruvate transferase domain"/>
    <property type="match status" value="2"/>
</dbReference>
<dbReference type="HAMAP" id="MF_00210">
    <property type="entry name" value="EPSP_synth"/>
    <property type="match status" value="1"/>
</dbReference>
<dbReference type="InterPro" id="IPR001986">
    <property type="entry name" value="Enolpyruvate_Tfrase_dom"/>
</dbReference>
<dbReference type="InterPro" id="IPR036968">
    <property type="entry name" value="Enolpyruvate_Tfrase_sf"/>
</dbReference>
<dbReference type="InterPro" id="IPR006264">
    <property type="entry name" value="EPSP_synthase"/>
</dbReference>
<dbReference type="InterPro" id="IPR023193">
    <property type="entry name" value="EPSP_synthase_CS"/>
</dbReference>
<dbReference type="InterPro" id="IPR013792">
    <property type="entry name" value="RNA3'P_cycl/enolpyr_Trfase_a/b"/>
</dbReference>
<dbReference type="NCBIfam" id="TIGR01356">
    <property type="entry name" value="aroA"/>
    <property type="match status" value="1"/>
</dbReference>
<dbReference type="PANTHER" id="PTHR21090">
    <property type="entry name" value="AROM/DEHYDROQUINATE SYNTHASE"/>
    <property type="match status" value="1"/>
</dbReference>
<dbReference type="PANTHER" id="PTHR21090:SF5">
    <property type="entry name" value="PENTAFUNCTIONAL AROM POLYPEPTIDE"/>
    <property type="match status" value="1"/>
</dbReference>
<dbReference type="Pfam" id="PF00275">
    <property type="entry name" value="EPSP_synthase"/>
    <property type="match status" value="1"/>
</dbReference>
<dbReference type="PIRSF" id="PIRSF000505">
    <property type="entry name" value="EPSPS"/>
    <property type="match status" value="1"/>
</dbReference>
<dbReference type="SUPFAM" id="SSF55205">
    <property type="entry name" value="EPT/RTPC-like"/>
    <property type="match status" value="1"/>
</dbReference>
<dbReference type="PROSITE" id="PS00104">
    <property type="entry name" value="EPSP_SYNTHASE_1"/>
    <property type="match status" value="1"/>
</dbReference>
<dbReference type="PROSITE" id="PS00885">
    <property type="entry name" value="EPSP_SYNTHASE_2"/>
    <property type="match status" value="1"/>
</dbReference>
<name>AROA_CHLSY</name>
<comment type="function">
    <text evidence="1">Catalyzes the transfer of the enolpyruvyl moiety of phosphoenolpyruvate (PEP) to the 5-hydroxyl of shikimate-3-phosphate (S3P) to produce enolpyruvyl shikimate-3-phosphate and inorganic phosphate.</text>
</comment>
<comment type="catalytic activity">
    <reaction evidence="1">
        <text>3-phosphoshikimate + phosphoenolpyruvate = 5-O-(1-carboxyvinyl)-3-phosphoshikimate + phosphate</text>
        <dbReference type="Rhea" id="RHEA:21256"/>
        <dbReference type="ChEBI" id="CHEBI:43474"/>
        <dbReference type="ChEBI" id="CHEBI:57701"/>
        <dbReference type="ChEBI" id="CHEBI:58702"/>
        <dbReference type="ChEBI" id="CHEBI:145989"/>
        <dbReference type="EC" id="2.5.1.19"/>
    </reaction>
    <physiologicalReaction direction="left-to-right" evidence="1">
        <dbReference type="Rhea" id="RHEA:21257"/>
    </physiologicalReaction>
</comment>
<comment type="pathway">
    <text evidence="1">Metabolic intermediate biosynthesis; chorismate biosynthesis; chorismate from D-erythrose 4-phosphate and phosphoenolpyruvate: step 6/7.</text>
</comment>
<comment type="subunit">
    <text evidence="1">Monomer.</text>
</comment>
<comment type="subcellular location">
    <subcellularLocation>
        <location evidence="1">Cytoplasm</location>
    </subcellularLocation>
</comment>
<comment type="similarity">
    <text evidence="1">Belongs to the EPSP synthase family.</text>
</comment>
<reference key="1">
    <citation type="submission" date="2009-01" db="EMBL/GenBank/DDBJ databases">
        <title>Complete sequence of Chloroflexus sp. Y-400-fl.</title>
        <authorList>
            <consortium name="US DOE Joint Genome Institute"/>
            <person name="Lucas S."/>
            <person name="Copeland A."/>
            <person name="Lapidus A."/>
            <person name="Glavina del Rio T."/>
            <person name="Dalin E."/>
            <person name="Tice H."/>
            <person name="Bruce D."/>
            <person name="Goodwin L."/>
            <person name="Pitluck S."/>
            <person name="Sims D."/>
            <person name="Kiss H."/>
            <person name="Brettin T."/>
            <person name="Detter J.C."/>
            <person name="Han C."/>
            <person name="Larimer F."/>
            <person name="Land M."/>
            <person name="Hauser L."/>
            <person name="Kyrpides N."/>
            <person name="Ovchinnikova G."/>
            <person name="Bryant D.A."/>
            <person name="Richardson P."/>
        </authorList>
    </citation>
    <scope>NUCLEOTIDE SEQUENCE [LARGE SCALE GENOMIC DNA]</scope>
    <source>
        <strain>ATCC 29364 / DSM 637 / Y-400-fl</strain>
    </source>
</reference>
<keyword id="KW-0028">Amino-acid biosynthesis</keyword>
<keyword id="KW-0057">Aromatic amino acid biosynthesis</keyword>
<keyword id="KW-0963">Cytoplasm</keyword>
<keyword id="KW-0808">Transferase</keyword>
<organism>
    <name type="scientific">Chloroflexus aurantiacus (strain ATCC 29364 / DSM 637 / Y-400-fl)</name>
    <dbReference type="NCBI Taxonomy" id="480224"/>
    <lineage>
        <taxon>Bacteria</taxon>
        <taxon>Bacillati</taxon>
        <taxon>Chloroflexota</taxon>
        <taxon>Chloroflexia</taxon>
        <taxon>Chloroflexales</taxon>
        <taxon>Chloroflexineae</taxon>
        <taxon>Chloroflexaceae</taxon>
        <taxon>Chloroflexus</taxon>
    </lineage>
</organism>
<evidence type="ECO:0000255" key="1">
    <source>
        <dbReference type="HAMAP-Rule" id="MF_00210"/>
    </source>
</evidence>
<gene>
    <name evidence="1" type="primary">aroA</name>
    <name type="ordered locus">Chy400_0062</name>
</gene>
<protein>
    <recommendedName>
        <fullName evidence="1">3-phosphoshikimate 1-carboxyvinyltransferase</fullName>
        <ecNumber evidence="1">2.5.1.19</ecNumber>
    </recommendedName>
    <alternativeName>
        <fullName evidence="1">5-enolpyruvylshikimate-3-phosphate synthase</fullName>
        <shortName evidence="1">EPSP synthase</shortName>
        <shortName evidence="1">EPSPS</shortName>
    </alternativeName>
</protein>
<proteinExistence type="inferred from homology"/>
<accession>B9LFL8</accession>
<feature type="chain" id="PRO_1000124678" description="3-phosphoshikimate 1-carboxyvinyltransferase">
    <location>
        <begin position="1"/>
        <end position="435"/>
    </location>
</feature>
<feature type="active site" description="Proton acceptor" evidence="1">
    <location>
        <position position="319"/>
    </location>
</feature>
<feature type="binding site" evidence="1">
    <location>
        <position position="22"/>
    </location>
    <ligand>
        <name>3-phosphoshikimate</name>
        <dbReference type="ChEBI" id="CHEBI:145989"/>
    </ligand>
</feature>
<feature type="binding site" evidence="1">
    <location>
        <position position="22"/>
    </location>
    <ligand>
        <name>phosphoenolpyruvate</name>
        <dbReference type="ChEBI" id="CHEBI:58702"/>
    </ligand>
</feature>
<feature type="binding site" evidence="1">
    <location>
        <position position="23"/>
    </location>
    <ligand>
        <name>3-phosphoshikimate</name>
        <dbReference type="ChEBI" id="CHEBI:145989"/>
    </ligand>
</feature>
<feature type="binding site" evidence="1">
    <location>
        <position position="27"/>
    </location>
    <ligand>
        <name>3-phosphoshikimate</name>
        <dbReference type="ChEBI" id="CHEBI:145989"/>
    </ligand>
</feature>
<feature type="binding site" evidence="1">
    <location>
        <position position="95"/>
    </location>
    <ligand>
        <name>phosphoenolpyruvate</name>
        <dbReference type="ChEBI" id="CHEBI:58702"/>
    </ligand>
</feature>
<feature type="binding site" evidence="1">
    <location>
        <position position="123"/>
    </location>
    <ligand>
        <name>phosphoenolpyruvate</name>
        <dbReference type="ChEBI" id="CHEBI:58702"/>
    </ligand>
</feature>
<feature type="binding site" evidence="1">
    <location>
        <position position="168"/>
    </location>
    <ligand>
        <name>3-phosphoshikimate</name>
        <dbReference type="ChEBI" id="CHEBI:145989"/>
    </ligand>
</feature>
<feature type="binding site" evidence="1">
    <location>
        <position position="170"/>
    </location>
    <ligand>
        <name>3-phosphoshikimate</name>
        <dbReference type="ChEBI" id="CHEBI:145989"/>
    </ligand>
</feature>
<feature type="binding site" evidence="1">
    <location>
        <position position="170"/>
    </location>
    <ligand>
        <name>phosphoenolpyruvate</name>
        <dbReference type="ChEBI" id="CHEBI:58702"/>
    </ligand>
</feature>
<feature type="binding site" evidence="1">
    <location>
        <position position="319"/>
    </location>
    <ligand>
        <name>3-phosphoshikimate</name>
        <dbReference type="ChEBI" id="CHEBI:145989"/>
    </ligand>
</feature>
<feature type="binding site" evidence="1">
    <location>
        <position position="346"/>
    </location>
    <ligand>
        <name>3-phosphoshikimate</name>
        <dbReference type="ChEBI" id="CHEBI:145989"/>
    </ligand>
</feature>
<feature type="binding site" evidence="1">
    <location>
        <position position="350"/>
    </location>
    <ligand>
        <name>phosphoenolpyruvate</name>
        <dbReference type="ChEBI" id="CHEBI:58702"/>
    </ligand>
</feature>
<feature type="binding site" evidence="1">
    <location>
        <position position="393"/>
    </location>
    <ligand>
        <name>phosphoenolpyruvate</name>
        <dbReference type="ChEBI" id="CHEBI:58702"/>
    </ligand>
</feature>
<sequence>MKGITLTAPKRLRGVIEVPGDKSISHRSVLFNAIATGSAHITHFLPGADCLSTVACIRALGVTVEQPAERELIVHGVGLGGLREPADVLDCGNSGTTLRLLAGLLAGHPFFSVLTGDASLRSRPQRRIVVPLRAMGAQIDGRDDGDRAPLAIRGNRLRGGHYELSIASAQVKSALLLAALNAEQPLTLTGRIDSRDHTERMLAAMGLEITVTADQITIQPPSEATAPTALSLRVPGDPSSAAFWWVAAAIHPDAELVTPGVCLNPTRIGAIEVLQAMGADLTVMNERLEGSEPVGDVVVRSSSLRGTTIAGTLIPRLIDEIPVLAVAAACASGETVIRDAQELRAKETDRIATVAAGLSAMGAVVEPTADGMVIVGQPGQLQGTTLNSFHDHRLAMAWAIAAMVARGETTILEPAAAAVSYPEFWQTLAMVQEAA</sequence>